<feature type="chain" id="PRO_0000159758" description="DNA-directed RNA polymerase subunit Rpo12">
    <location>
        <begin position="1"/>
        <end position="46"/>
    </location>
</feature>
<feature type="binding site" evidence="1">
    <location>
        <position position="9"/>
    </location>
    <ligand>
        <name>Zn(2+)</name>
        <dbReference type="ChEBI" id="CHEBI:29105"/>
    </ligand>
</feature>
<feature type="binding site" evidence="1">
    <location>
        <position position="24"/>
    </location>
    <ligand>
        <name>Zn(2+)</name>
        <dbReference type="ChEBI" id="CHEBI:29105"/>
    </ligand>
</feature>
<feature type="binding site" evidence="1">
    <location>
        <position position="27"/>
    </location>
    <ligand>
        <name>Zn(2+)</name>
        <dbReference type="ChEBI" id="CHEBI:29105"/>
    </ligand>
</feature>
<reference key="1">
    <citation type="journal article" date="1996" name="Science">
        <title>Complete genome sequence of the methanogenic archaeon, Methanococcus jannaschii.</title>
        <authorList>
            <person name="Bult C.J."/>
            <person name="White O."/>
            <person name="Olsen G.J."/>
            <person name="Zhou L."/>
            <person name="Fleischmann R.D."/>
            <person name="Sutton G.G."/>
            <person name="Blake J.A."/>
            <person name="FitzGerald L.M."/>
            <person name="Clayton R.A."/>
            <person name="Gocayne J.D."/>
            <person name="Kerlavage A.R."/>
            <person name="Dougherty B.A."/>
            <person name="Tomb J.-F."/>
            <person name="Adams M.D."/>
            <person name="Reich C.I."/>
            <person name="Overbeek R."/>
            <person name="Kirkness E.F."/>
            <person name="Weinstock K.G."/>
            <person name="Merrick J.M."/>
            <person name="Glodek A."/>
            <person name="Scott J.L."/>
            <person name="Geoghagen N.S.M."/>
            <person name="Weidman J.F."/>
            <person name="Fuhrmann J.L."/>
            <person name="Nguyen D."/>
            <person name="Utterback T.R."/>
            <person name="Kelley J.M."/>
            <person name="Peterson J.D."/>
            <person name="Sadow P.W."/>
            <person name="Hanna M.C."/>
            <person name="Cotton M.D."/>
            <person name="Roberts K.M."/>
            <person name="Hurst M.A."/>
            <person name="Kaine B.P."/>
            <person name="Borodovsky M."/>
            <person name="Klenk H.-P."/>
            <person name="Fraser C.M."/>
            <person name="Smith H.O."/>
            <person name="Woese C.R."/>
            <person name="Venter J.C."/>
        </authorList>
    </citation>
    <scope>NUCLEOTIDE SEQUENCE [LARGE SCALE GENOMIC DNA]</scope>
    <source>
        <strain>ATCC 43067 / DSM 2661 / JAL-1 / JCM 10045 / NBRC 100440</strain>
    </source>
</reference>
<reference key="2">
    <citation type="journal article" date="2000" name="Nucleic Acids Res.">
        <title>Archaeal RNA polymerase subunits F and P are bona fide homologs of eukaryotic RPB4 and RPB12.</title>
        <authorList>
            <person name="Werner F."/>
            <person name="Eloranta J.J."/>
            <person name="Weinzierl R.O."/>
        </authorList>
    </citation>
    <scope>INTERACTION WITH RPO3</scope>
    <scope>SUBUNIT</scope>
</reference>
<name>RPO12_METJA</name>
<organism>
    <name type="scientific">Methanocaldococcus jannaschii (strain ATCC 43067 / DSM 2661 / JAL-1 / JCM 10045 / NBRC 100440)</name>
    <name type="common">Methanococcus jannaschii</name>
    <dbReference type="NCBI Taxonomy" id="243232"/>
    <lineage>
        <taxon>Archaea</taxon>
        <taxon>Methanobacteriati</taxon>
        <taxon>Methanobacteriota</taxon>
        <taxon>Methanomada group</taxon>
        <taxon>Methanococci</taxon>
        <taxon>Methanococcales</taxon>
        <taxon>Methanocaldococcaceae</taxon>
        <taxon>Methanocaldococcus</taxon>
    </lineage>
</organism>
<dbReference type="EC" id="2.7.7.6" evidence="1"/>
<dbReference type="EMBL" id="L77117">
    <property type="status" value="NOT_ANNOTATED_CDS"/>
    <property type="molecule type" value="Genomic_DNA"/>
</dbReference>
<dbReference type="RefSeq" id="WP_064496553.1">
    <property type="nucleotide sequence ID" value="NC_000909.1"/>
</dbReference>
<dbReference type="SMR" id="P59283"/>
<dbReference type="GeneID" id="27929961"/>
<dbReference type="InParanoid" id="P59283"/>
<dbReference type="OrthoDB" id="129238at2157"/>
<dbReference type="PhylomeDB" id="P59283"/>
<dbReference type="Proteomes" id="UP000000805">
    <property type="component" value="Chromosome"/>
</dbReference>
<dbReference type="GO" id="GO:0005737">
    <property type="term" value="C:cytoplasm"/>
    <property type="evidence" value="ECO:0007669"/>
    <property type="project" value="UniProtKB-SubCell"/>
</dbReference>
<dbReference type="GO" id="GO:0000428">
    <property type="term" value="C:DNA-directed RNA polymerase complex"/>
    <property type="evidence" value="ECO:0007669"/>
    <property type="project" value="UniProtKB-KW"/>
</dbReference>
<dbReference type="GO" id="GO:0003677">
    <property type="term" value="F:DNA binding"/>
    <property type="evidence" value="ECO:0007669"/>
    <property type="project" value="InterPro"/>
</dbReference>
<dbReference type="GO" id="GO:0003899">
    <property type="term" value="F:DNA-directed RNA polymerase activity"/>
    <property type="evidence" value="ECO:0007669"/>
    <property type="project" value="UniProtKB-UniRule"/>
</dbReference>
<dbReference type="GO" id="GO:0008270">
    <property type="term" value="F:zinc ion binding"/>
    <property type="evidence" value="ECO:0007669"/>
    <property type="project" value="UniProtKB-UniRule"/>
</dbReference>
<dbReference type="GO" id="GO:0006351">
    <property type="term" value="P:DNA-templated transcription"/>
    <property type="evidence" value="ECO:0007669"/>
    <property type="project" value="UniProtKB-UniRule"/>
</dbReference>
<dbReference type="Gene3D" id="2.20.28.30">
    <property type="entry name" value="RNA polymerase ii, chain L"/>
    <property type="match status" value="1"/>
</dbReference>
<dbReference type="HAMAP" id="MF_00615">
    <property type="entry name" value="RNApol_arch_Rpo12"/>
    <property type="match status" value="1"/>
</dbReference>
<dbReference type="InterPro" id="IPR006591">
    <property type="entry name" value="RNAP_P/RPABC4"/>
</dbReference>
<dbReference type="InterPro" id="IPR029040">
    <property type="entry name" value="RPABC4/Spt4"/>
</dbReference>
<dbReference type="InterPro" id="IPR023464">
    <property type="entry name" value="Rpo12"/>
</dbReference>
<dbReference type="NCBIfam" id="NF001608">
    <property type="entry name" value="PRK00398.1-6"/>
    <property type="match status" value="1"/>
</dbReference>
<dbReference type="SMART" id="SM00659">
    <property type="entry name" value="RPOLCX"/>
    <property type="match status" value="1"/>
</dbReference>
<dbReference type="SUPFAM" id="SSF63393">
    <property type="entry name" value="RNA polymerase subunits"/>
    <property type="match status" value="1"/>
</dbReference>
<gene>
    <name evidence="1" type="primary">rpo12</name>
    <name evidence="1" type="synonym">rpoP</name>
    <name type="ordered locus">MJ0593.1</name>
</gene>
<protein>
    <recommendedName>
        <fullName evidence="1">DNA-directed RNA polymerase subunit Rpo12</fullName>
        <ecNumber evidence="1">2.7.7.6</ecNumber>
    </recommendedName>
    <alternativeName>
        <fullName evidence="1 3">DNA-directed RNA polymerase subunit P</fullName>
        <shortName evidence="3">mjP</shortName>
    </alternativeName>
</protein>
<comment type="function">
    <text evidence="1">DNA-dependent RNA polymerase (RNAP) catalyzes the transcription of DNA into RNA using the four ribonucleoside triphosphates as substrates.</text>
</comment>
<comment type="catalytic activity">
    <reaction evidence="1">
        <text>RNA(n) + a ribonucleoside 5'-triphosphate = RNA(n+1) + diphosphate</text>
        <dbReference type="Rhea" id="RHEA:21248"/>
        <dbReference type="Rhea" id="RHEA-COMP:14527"/>
        <dbReference type="Rhea" id="RHEA-COMP:17342"/>
        <dbReference type="ChEBI" id="CHEBI:33019"/>
        <dbReference type="ChEBI" id="CHEBI:61557"/>
        <dbReference type="ChEBI" id="CHEBI:140395"/>
        <dbReference type="EC" id="2.7.7.6"/>
    </reaction>
</comment>
<comment type="cofactor">
    <cofactor evidence="1">
        <name>Zn(2+)</name>
        <dbReference type="ChEBI" id="CHEBI:29105"/>
    </cofactor>
    <text evidence="1">Binds 1 zinc ion.</text>
</comment>
<comment type="subunit">
    <text evidence="1 2">Part of the RNA polymerase complex (By similarity). Interacts with Rpo3. Forms an Rpo3-Rpo10-Rpo11-Rpo12 complex upon coexpression (PubMed:11058130).</text>
</comment>
<comment type="subcellular location">
    <subcellularLocation>
        <location evidence="1">Cytoplasm</location>
    </subcellularLocation>
</comment>
<comment type="similarity">
    <text evidence="1">Belongs to the archaeal Rpo12/eukaryotic RPC10 RNA polymerase subunit family.</text>
</comment>
<evidence type="ECO:0000255" key="1">
    <source>
        <dbReference type="HAMAP-Rule" id="MF_00615"/>
    </source>
</evidence>
<evidence type="ECO:0000269" key="2">
    <source>
    </source>
</evidence>
<evidence type="ECO:0000303" key="3">
    <source>
    </source>
</evidence>
<proteinExistence type="evidence at protein level"/>
<keyword id="KW-0963">Cytoplasm</keyword>
<keyword id="KW-0240">DNA-directed RNA polymerase</keyword>
<keyword id="KW-0479">Metal-binding</keyword>
<keyword id="KW-0548">Nucleotidyltransferase</keyword>
<keyword id="KW-1185">Reference proteome</keyword>
<keyword id="KW-0804">Transcription</keyword>
<keyword id="KW-0808">Transferase</keyword>
<keyword id="KW-0862">Zinc</keyword>
<sequence>MVEYKCLNCKKIIKLEELGKRARCPHCSYKILVKLRPKVVKHVKAR</sequence>
<accession>P59283</accession>